<feature type="chain" id="PRO_0000181555" description="Large ribosomal subunit protein bL25">
    <location>
        <begin position="1"/>
        <end position="178"/>
    </location>
</feature>
<comment type="function">
    <text evidence="1">This is one of the proteins that binds to the 5S RNA in the ribosome where it forms part of the central protuberance.</text>
</comment>
<comment type="subunit">
    <text evidence="1">Part of the 50S ribosomal subunit; part of the 5S rRNA/L5/L18/L25 subcomplex. Contacts the 5S rRNA. Binds to the 5S rRNA independently of L5 and L18.</text>
</comment>
<comment type="similarity">
    <text evidence="1">Belongs to the bacterial ribosomal protein bL25 family. CTC subfamily.</text>
</comment>
<sequence>MLEGVIRESITKANAKALKKDGYLIANIYGKGVENVNCAFKLNPFIKYLKEKKHLIFPVKLGDKTFEVVVQEYQKNPVTNELIHVDLLAVTKGVKSKFKVPVKHQGTPVGLKNKGILMLSKKRISVECAPEHLPDHYLVDVAPLDVNESILVRDLEKHENVKILDHDSIAVIGVIKAK</sequence>
<reference key="1">
    <citation type="journal article" date="1999" name="Nature">
        <title>Genomic sequence comparison of two unrelated isolates of the human gastric pathogen Helicobacter pylori.</title>
        <authorList>
            <person name="Alm R.A."/>
            <person name="Ling L.-S.L."/>
            <person name="Moir D.T."/>
            <person name="King B.L."/>
            <person name="Brown E.D."/>
            <person name="Doig P.C."/>
            <person name="Smith D.R."/>
            <person name="Noonan B."/>
            <person name="Guild B.C."/>
            <person name="deJonge B.L."/>
            <person name="Carmel G."/>
            <person name="Tummino P.J."/>
            <person name="Caruso A."/>
            <person name="Uria-Nickelsen M."/>
            <person name="Mills D.M."/>
            <person name="Ives C."/>
            <person name="Gibson R."/>
            <person name="Merberg D."/>
            <person name="Mills S.D."/>
            <person name="Jiang Q."/>
            <person name="Taylor D.E."/>
            <person name="Vovis G.F."/>
            <person name="Trust T.J."/>
        </authorList>
    </citation>
    <scope>NUCLEOTIDE SEQUENCE [LARGE SCALE GENOMIC DNA]</scope>
    <source>
        <strain>J99 / ATCC 700824</strain>
    </source>
</reference>
<accession>Q9ZJC4</accession>
<name>RL25_HELPJ</name>
<protein>
    <recommendedName>
        <fullName evidence="1">Large ribosomal subunit protein bL25</fullName>
    </recommendedName>
    <alternativeName>
        <fullName evidence="2">50S ribosomal protein L25</fullName>
    </alternativeName>
    <alternativeName>
        <fullName evidence="1">General stress protein CTC</fullName>
    </alternativeName>
</protein>
<organism>
    <name type="scientific">Helicobacter pylori (strain J99 / ATCC 700824)</name>
    <name type="common">Campylobacter pylori J99</name>
    <dbReference type="NCBI Taxonomy" id="85963"/>
    <lineage>
        <taxon>Bacteria</taxon>
        <taxon>Pseudomonadati</taxon>
        <taxon>Campylobacterota</taxon>
        <taxon>Epsilonproteobacteria</taxon>
        <taxon>Campylobacterales</taxon>
        <taxon>Helicobacteraceae</taxon>
        <taxon>Helicobacter</taxon>
    </lineage>
</organism>
<keyword id="KW-0687">Ribonucleoprotein</keyword>
<keyword id="KW-0689">Ribosomal protein</keyword>
<keyword id="KW-0694">RNA-binding</keyword>
<keyword id="KW-0699">rRNA-binding</keyword>
<gene>
    <name evidence="1" type="primary">rplY</name>
    <name evidence="1" type="synonym">ctc</name>
    <name type="ordered locus">jhp_1389</name>
</gene>
<evidence type="ECO:0000255" key="1">
    <source>
        <dbReference type="HAMAP-Rule" id="MF_01334"/>
    </source>
</evidence>
<evidence type="ECO:0000305" key="2"/>
<dbReference type="EMBL" id="AE001439">
    <property type="protein sequence ID" value="AAD06970.1"/>
    <property type="molecule type" value="Genomic_DNA"/>
</dbReference>
<dbReference type="PIR" id="F71812">
    <property type="entry name" value="F71812"/>
</dbReference>
<dbReference type="RefSeq" id="WP_000889309.1">
    <property type="nucleotide sequence ID" value="NC_000921.1"/>
</dbReference>
<dbReference type="SMR" id="Q9ZJC4"/>
<dbReference type="KEGG" id="hpj:jhp_1389"/>
<dbReference type="PATRIC" id="fig|85963.30.peg.1162"/>
<dbReference type="eggNOG" id="COG1825">
    <property type="taxonomic scope" value="Bacteria"/>
</dbReference>
<dbReference type="Proteomes" id="UP000000804">
    <property type="component" value="Chromosome"/>
</dbReference>
<dbReference type="GO" id="GO:0022625">
    <property type="term" value="C:cytosolic large ribosomal subunit"/>
    <property type="evidence" value="ECO:0007669"/>
    <property type="project" value="TreeGrafter"/>
</dbReference>
<dbReference type="GO" id="GO:0008097">
    <property type="term" value="F:5S rRNA binding"/>
    <property type="evidence" value="ECO:0007669"/>
    <property type="project" value="InterPro"/>
</dbReference>
<dbReference type="GO" id="GO:0003735">
    <property type="term" value="F:structural constituent of ribosome"/>
    <property type="evidence" value="ECO:0007669"/>
    <property type="project" value="InterPro"/>
</dbReference>
<dbReference type="GO" id="GO:0006412">
    <property type="term" value="P:translation"/>
    <property type="evidence" value="ECO:0007669"/>
    <property type="project" value="UniProtKB-UniRule"/>
</dbReference>
<dbReference type="CDD" id="cd00495">
    <property type="entry name" value="Ribosomal_L25_TL5_CTC"/>
    <property type="match status" value="1"/>
</dbReference>
<dbReference type="Gene3D" id="2.170.120.20">
    <property type="entry name" value="Ribosomal protein L25, beta domain"/>
    <property type="match status" value="1"/>
</dbReference>
<dbReference type="Gene3D" id="2.40.240.10">
    <property type="entry name" value="Ribosomal Protein L25, Chain P"/>
    <property type="match status" value="1"/>
</dbReference>
<dbReference type="HAMAP" id="MF_01334">
    <property type="entry name" value="Ribosomal_bL25_CTC"/>
    <property type="match status" value="1"/>
</dbReference>
<dbReference type="InterPro" id="IPR020056">
    <property type="entry name" value="Rbsml_bL25/Gln-tRNA_synth_N"/>
</dbReference>
<dbReference type="InterPro" id="IPR011035">
    <property type="entry name" value="Ribosomal_bL25/Gln-tRNA_synth"/>
</dbReference>
<dbReference type="InterPro" id="IPR020057">
    <property type="entry name" value="Ribosomal_bL25_b-dom"/>
</dbReference>
<dbReference type="InterPro" id="IPR037121">
    <property type="entry name" value="Ribosomal_bL25_C"/>
</dbReference>
<dbReference type="InterPro" id="IPR001021">
    <property type="entry name" value="Ribosomal_bL25_long"/>
</dbReference>
<dbReference type="InterPro" id="IPR029751">
    <property type="entry name" value="Ribosomal_L25_dom"/>
</dbReference>
<dbReference type="InterPro" id="IPR020930">
    <property type="entry name" value="Ribosomal_uL5_bac-type"/>
</dbReference>
<dbReference type="NCBIfam" id="TIGR00731">
    <property type="entry name" value="bL25_bact_ctc"/>
    <property type="match status" value="1"/>
</dbReference>
<dbReference type="NCBIfam" id="NF004129">
    <property type="entry name" value="PRK05618.1-4"/>
    <property type="match status" value="1"/>
</dbReference>
<dbReference type="PANTHER" id="PTHR33284">
    <property type="entry name" value="RIBOSOMAL PROTEIN L25/GLN-TRNA SYNTHETASE, ANTI-CODON-BINDING DOMAIN-CONTAINING PROTEIN"/>
    <property type="match status" value="1"/>
</dbReference>
<dbReference type="PANTHER" id="PTHR33284:SF1">
    <property type="entry name" value="RIBOSOMAL PROTEIN L25_GLN-TRNA SYNTHETASE, ANTI-CODON-BINDING DOMAIN-CONTAINING PROTEIN"/>
    <property type="match status" value="1"/>
</dbReference>
<dbReference type="Pfam" id="PF01386">
    <property type="entry name" value="Ribosomal_L25p"/>
    <property type="match status" value="1"/>
</dbReference>
<dbReference type="Pfam" id="PF14693">
    <property type="entry name" value="Ribosomal_TL5_C"/>
    <property type="match status" value="1"/>
</dbReference>
<dbReference type="SUPFAM" id="SSF50715">
    <property type="entry name" value="Ribosomal protein L25-like"/>
    <property type="match status" value="1"/>
</dbReference>
<proteinExistence type="inferred from homology"/>